<dbReference type="EMBL" id="BX248497">
    <property type="protein sequence ID" value="CAQ14065.1"/>
    <property type="molecule type" value="Genomic_DNA"/>
</dbReference>
<dbReference type="EMBL" id="BC049443">
    <property type="protein sequence ID" value="AAH49443.1"/>
    <property type="molecule type" value="mRNA"/>
</dbReference>
<dbReference type="EMBL" id="BC062861">
    <property type="protein sequence ID" value="AAH62861.1"/>
    <property type="molecule type" value="mRNA"/>
</dbReference>
<dbReference type="RefSeq" id="NP_956041.2">
    <property type="nucleotide sequence ID" value="NM_199747.2"/>
</dbReference>
<dbReference type="FunCoup" id="Q6P5J6">
    <property type="interactions" value="2435"/>
</dbReference>
<dbReference type="STRING" id="7955.ENSDARP00000045055"/>
<dbReference type="PaxDb" id="7955-ENSDARP00000045055"/>
<dbReference type="Ensembl" id="ENSDART00000045056">
    <property type="protein sequence ID" value="ENSDARP00000045055"/>
    <property type="gene ID" value="ENSDARG00000030591"/>
</dbReference>
<dbReference type="GeneID" id="326793"/>
<dbReference type="KEGG" id="dre:326793"/>
<dbReference type="AGR" id="ZFIN:ZDB-GENE-030131-4992"/>
<dbReference type="CTD" id="115353"/>
<dbReference type="ZFIN" id="ZDB-GENE-030131-4992">
    <property type="gene designation" value="lrrc42"/>
</dbReference>
<dbReference type="eggNOG" id="ENOG502QQJZ">
    <property type="taxonomic scope" value="Eukaryota"/>
</dbReference>
<dbReference type="HOGENOM" id="CLU_053705_0_0_1"/>
<dbReference type="InParanoid" id="Q6P5J6"/>
<dbReference type="OMA" id="FYGKTHR"/>
<dbReference type="OrthoDB" id="120976at2759"/>
<dbReference type="PhylomeDB" id="Q6P5J6"/>
<dbReference type="TreeFam" id="TF331102"/>
<dbReference type="PRO" id="PR:Q6P5J6"/>
<dbReference type="Proteomes" id="UP000000437">
    <property type="component" value="Chromosome 2"/>
</dbReference>
<dbReference type="Bgee" id="ENSDARG00000030591">
    <property type="expression patterns" value="Expressed in ovary and 29 other cell types or tissues"/>
</dbReference>
<dbReference type="Gene3D" id="3.80.10.10">
    <property type="entry name" value="Ribonuclease Inhibitor"/>
    <property type="match status" value="1"/>
</dbReference>
<dbReference type="InterPro" id="IPR001611">
    <property type="entry name" value="Leu-rich_rpt"/>
</dbReference>
<dbReference type="InterPro" id="IPR032675">
    <property type="entry name" value="LRR_dom_sf"/>
</dbReference>
<dbReference type="InterPro" id="IPR039631">
    <property type="entry name" value="LRRC42"/>
</dbReference>
<dbReference type="PANTHER" id="PTHR31994">
    <property type="entry name" value="LEUCINE-RICH REPEAT-CONTAINING PROTEIN 42"/>
    <property type="match status" value="1"/>
</dbReference>
<dbReference type="PANTHER" id="PTHR31994:SF3">
    <property type="entry name" value="LEUCINE-RICH REPEAT-CONTAINING PROTEIN 42"/>
    <property type="match status" value="1"/>
</dbReference>
<dbReference type="Pfam" id="PF13516">
    <property type="entry name" value="LRR_6"/>
    <property type="match status" value="1"/>
</dbReference>
<dbReference type="SUPFAM" id="SSF52047">
    <property type="entry name" value="RNI-like"/>
    <property type="match status" value="1"/>
</dbReference>
<dbReference type="PROSITE" id="PS51450">
    <property type="entry name" value="LRR"/>
    <property type="match status" value="3"/>
</dbReference>
<protein>
    <recommendedName>
        <fullName>Leucine-rich repeat-containing protein 42</fullName>
    </recommendedName>
</protein>
<comment type="similarity">
    <text evidence="2">Belongs to the LRRC42 family.</text>
</comment>
<evidence type="ECO:0000256" key="1">
    <source>
        <dbReference type="SAM" id="MobiDB-lite"/>
    </source>
</evidence>
<evidence type="ECO:0000305" key="2"/>
<organism>
    <name type="scientific">Danio rerio</name>
    <name type="common">Zebrafish</name>
    <name type="synonym">Brachydanio rerio</name>
    <dbReference type="NCBI Taxonomy" id="7955"/>
    <lineage>
        <taxon>Eukaryota</taxon>
        <taxon>Metazoa</taxon>
        <taxon>Chordata</taxon>
        <taxon>Craniata</taxon>
        <taxon>Vertebrata</taxon>
        <taxon>Euteleostomi</taxon>
        <taxon>Actinopterygii</taxon>
        <taxon>Neopterygii</taxon>
        <taxon>Teleostei</taxon>
        <taxon>Ostariophysi</taxon>
        <taxon>Cypriniformes</taxon>
        <taxon>Danionidae</taxon>
        <taxon>Danioninae</taxon>
        <taxon>Danio</taxon>
    </lineage>
</organism>
<gene>
    <name type="primary">lrrc42</name>
    <name type="ORF">si:dkey-181m9.2</name>
</gene>
<feature type="chain" id="PRO_0000360041" description="Leucine-rich repeat-containing protein 42">
    <location>
        <begin position="1"/>
        <end position="407"/>
    </location>
</feature>
<feature type="repeat" description="LRR 1">
    <location>
        <begin position="138"/>
        <end position="159"/>
    </location>
</feature>
<feature type="repeat" description="LRR 2">
    <location>
        <begin position="163"/>
        <end position="184"/>
    </location>
</feature>
<feature type="repeat" description="LRR 3">
    <location>
        <begin position="191"/>
        <end position="211"/>
    </location>
</feature>
<feature type="repeat" description="LRR 4">
    <location>
        <begin position="223"/>
        <end position="243"/>
    </location>
</feature>
<feature type="repeat" description="LRR 5">
    <location>
        <begin position="247"/>
        <end position="268"/>
    </location>
</feature>
<feature type="region of interest" description="Disordered" evidence="1">
    <location>
        <begin position="360"/>
        <end position="389"/>
    </location>
</feature>
<feature type="sequence conflict" description="In Ref. 1; AAH49443." evidence="2" ref="1">
    <original>S</original>
    <variation>T</variation>
    <location>
        <position position="53"/>
    </location>
</feature>
<feature type="sequence conflict" description="In Ref. 1; AAH49443." evidence="2" ref="1">
    <original>L</original>
    <variation>I</variation>
    <location>
        <position position="253"/>
    </location>
</feature>
<feature type="sequence conflict" description="In Ref. 1; AAH49443." evidence="2" ref="1">
    <original>M</original>
    <variation>T</variation>
    <location>
        <position position="259"/>
    </location>
</feature>
<feature type="sequence conflict" description="In Ref. 1; AAH49443." evidence="2" ref="1">
    <original>M</original>
    <variation>MK</variation>
    <location>
        <position position="270"/>
    </location>
</feature>
<feature type="sequence conflict" description="In Ref. 1; AAH49443." evidence="2" ref="1">
    <original>A</original>
    <variation>T</variation>
    <location>
        <position position="387"/>
    </location>
</feature>
<reference key="1">
    <citation type="journal article" date="2013" name="Nature">
        <title>The zebrafish reference genome sequence and its relationship to the human genome.</title>
        <authorList>
            <person name="Howe K."/>
            <person name="Clark M.D."/>
            <person name="Torroja C.F."/>
            <person name="Torrance J."/>
            <person name="Berthelot C."/>
            <person name="Muffato M."/>
            <person name="Collins J.E."/>
            <person name="Humphray S."/>
            <person name="McLaren K."/>
            <person name="Matthews L."/>
            <person name="McLaren S."/>
            <person name="Sealy I."/>
            <person name="Caccamo M."/>
            <person name="Churcher C."/>
            <person name="Scott C."/>
            <person name="Barrett J.C."/>
            <person name="Koch R."/>
            <person name="Rauch G.J."/>
            <person name="White S."/>
            <person name="Chow W."/>
            <person name="Kilian B."/>
            <person name="Quintais L.T."/>
            <person name="Guerra-Assuncao J.A."/>
            <person name="Zhou Y."/>
            <person name="Gu Y."/>
            <person name="Yen J."/>
            <person name="Vogel J.H."/>
            <person name="Eyre T."/>
            <person name="Redmond S."/>
            <person name="Banerjee R."/>
            <person name="Chi J."/>
            <person name="Fu B."/>
            <person name="Langley E."/>
            <person name="Maguire S.F."/>
            <person name="Laird G.K."/>
            <person name="Lloyd D."/>
            <person name="Kenyon E."/>
            <person name="Donaldson S."/>
            <person name="Sehra H."/>
            <person name="Almeida-King J."/>
            <person name="Loveland J."/>
            <person name="Trevanion S."/>
            <person name="Jones M."/>
            <person name="Quail M."/>
            <person name="Willey D."/>
            <person name="Hunt A."/>
            <person name="Burton J."/>
            <person name="Sims S."/>
            <person name="McLay K."/>
            <person name="Plumb B."/>
            <person name="Davis J."/>
            <person name="Clee C."/>
            <person name="Oliver K."/>
            <person name="Clark R."/>
            <person name="Riddle C."/>
            <person name="Elliot D."/>
            <person name="Threadgold G."/>
            <person name="Harden G."/>
            <person name="Ware D."/>
            <person name="Begum S."/>
            <person name="Mortimore B."/>
            <person name="Kerry G."/>
            <person name="Heath P."/>
            <person name="Phillimore B."/>
            <person name="Tracey A."/>
            <person name="Corby N."/>
            <person name="Dunn M."/>
            <person name="Johnson C."/>
            <person name="Wood J."/>
            <person name="Clark S."/>
            <person name="Pelan S."/>
            <person name="Griffiths G."/>
            <person name="Smith M."/>
            <person name="Glithero R."/>
            <person name="Howden P."/>
            <person name="Barker N."/>
            <person name="Lloyd C."/>
            <person name="Stevens C."/>
            <person name="Harley J."/>
            <person name="Holt K."/>
            <person name="Panagiotidis G."/>
            <person name="Lovell J."/>
            <person name="Beasley H."/>
            <person name="Henderson C."/>
            <person name="Gordon D."/>
            <person name="Auger K."/>
            <person name="Wright D."/>
            <person name="Collins J."/>
            <person name="Raisen C."/>
            <person name="Dyer L."/>
            <person name="Leung K."/>
            <person name="Robertson L."/>
            <person name="Ambridge K."/>
            <person name="Leongamornlert D."/>
            <person name="McGuire S."/>
            <person name="Gilderthorp R."/>
            <person name="Griffiths C."/>
            <person name="Manthravadi D."/>
            <person name="Nichol S."/>
            <person name="Barker G."/>
            <person name="Whitehead S."/>
            <person name="Kay M."/>
            <person name="Brown J."/>
            <person name="Murnane C."/>
            <person name="Gray E."/>
            <person name="Humphries M."/>
            <person name="Sycamore N."/>
            <person name="Barker D."/>
            <person name="Saunders D."/>
            <person name="Wallis J."/>
            <person name="Babbage A."/>
            <person name="Hammond S."/>
            <person name="Mashreghi-Mohammadi M."/>
            <person name="Barr L."/>
            <person name="Martin S."/>
            <person name="Wray P."/>
            <person name="Ellington A."/>
            <person name="Matthews N."/>
            <person name="Ellwood M."/>
            <person name="Woodmansey R."/>
            <person name="Clark G."/>
            <person name="Cooper J."/>
            <person name="Tromans A."/>
            <person name="Grafham D."/>
            <person name="Skuce C."/>
            <person name="Pandian R."/>
            <person name="Andrews R."/>
            <person name="Harrison E."/>
            <person name="Kimberley A."/>
            <person name="Garnett J."/>
            <person name="Fosker N."/>
            <person name="Hall R."/>
            <person name="Garner P."/>
            <person name="Kelly D."/>
            <person name="Bird C."/>
            <person name="Palmer S."/>
            <person name="Gehring I."/>
            <person name="Berger A."/>
            <person name="Dooley C.M."/>
            <person name="Ersan-Urun Z."/>
            <person name="Eser C."/>
            <person name="Geiger H."/>
            <person name="Geisler M."/>
            <person name="Karotki L."/>
            <person name="Kirn A."/>
            <person name="Konantz J."/>
            <person name="Konantz M."/>
            <person name="Oberlander M."/>
            <person name="Rudolph-Geiger S."/>
            <person name="Teucke M."/>
            <person name="Lanz C."/>
            <person name="Raddatz G."/>
            <person name="Osoegawa K."/>
            <person name="Zhu B."/>
            <person name="Rapp A."/>
            <person name="Widaa S."/>
            <person name="Langford C."/>
            <person name="Yang F."/>
            <person name="Schuster S.C."/>
            <person name="Carter N.P."/>
            <person name="Harrow J."/>
            <person name="Ning Z."/>
            <person name="Herrero J."/>
            <person name="Searle S.M."/>
            <person name="Enright A."/>
            <person name="Geisler R."/>
            <person name="Plasterk R.H."/>
            <person name="Lee C."/>
            <person name="Westerfield M."/>
            <person name="de Jong P.J."/>
            <person name="Zon L.I."/>
            <person name="Postlethwait J.H."/>
            <person name="Nusslein-Volhard C."/>
            <person name="Hubbard T.J."/>
            <person name="Roest Crollius H."/>
            <person name="Rogers J."/>
            <person name="Stemple D.L."/>
        </authorList>
    </citation>
    <scope>NUCLEOTIDE SEQUENCE [LARGE SCALE GENOMIC DNA]</scope>
    <source>
        <strain>Tuebingen</strain>
    </source>
</reference>
<reference key="2">
    <citation type="submission" date="2003-11" db="EMBL/GenBank/DDBJ databases">
        <authorList>
            <consortium name="NIH - Zebrafish Gene Collection (ZGC) project"/>
        </authorList>
    </citation>
    <scope>NUCLEOTIDE SEQUENCE [LARGE SCALE MRNA]</scope>
</reference>
<accession>Q6P5J6</accession>
<accession>Q7ZWF1</accession>
<keyword id="KW-0433">Leucine-rich repeat</keyword>
<keyword id="KW-1185">Reference proteome</keyword>
<keyword id="KW-0677">Repeat</keyword>
<sequence length="407" mass="46403">MYLGEDCGAVYVRENGELRCVSAVKTVDPPPQNRLFTRDFTFQLCIDTLPSASRAERRDHFIFTYNKQGSLRYSVKTLFDISLQFIADHVEHVDSLVGFPEQMADKLFSAAEERGKFAELRTASRALQLFCEAYGELVLKSLCLRNRYLLISERLEEIRQFQSLECLDLYGCRLGDNHELFKYITSEALSSLVKLFMGANCLSDAGLQRLTAPVRVMKKGLENLQLLDLSENHITEKGLRYLTCFKTLQKLDLSGTKVMMDVSLKGFFRMMGMALSETPLMDFTHTACKTEGWAEQVINQWEITAAEVPKKDPKPRTNALRFYGREKFVREMLNSWSETSDATNKDKAVPIHFCKVDDCVQSSPSGETHSTHKSRKRRLSTEEEQSAAPVAKRLPLSVEDLHLLNSY</sequence>
<proteinExistence type="evidence at transcript level"/>
<name>LRC42_DANRE</name>